<protein>
    <recommendedName>
        <fullName evidence="1">Small ribosomal subunit protein uS14A</fullName>
    </recommendedName>
    <alternativeName>
        <fullName evidence="2">30S ribosomal protein S14</fullName>
    </alternativeName>
</protein>
<sequence length="89" mass="10443">MAKKSKVAKHERQQALVEQYAELRRTLKAEGRYDELRKLPRDSSPSRLHNRCELTGRPHGYMRKFGISRIRFRELAHQGQLPGVTKASW</sequence>
<proteinExistence type="inferred from homology"/>
<gene>
    <name evidence="1" type="primary">rpsN</name>
    <name type="ordered locus">LMOf2365_1911</name>
</gene>
<organism>
    <name type="scientific">Listeria monocytogenes serotype 4b (strain F2365)</name>
    <dbReference type="NCBI Taxonomy" id="265669"/>
    <lineage>
        <taxon>Bacteria</taxon>
        <taxon>Bacillati</taxon>
        <taxon>Bacillota</taxon>
        <taxon>Bacilli</taxon>
        <taxon>Bacillales</taxon>
        <taxon>Listeriaceae</taxon>
        <taxon>Listeria</taxon>
    </lineage>
</organism>
<reference key="1">
    <citation type="journal article" date="2004" name="Nucleic Acids Res.">
        <title>Whole genome comparisons of serotype 4b and 1/2a strains of the food-borne pathogen Listeria monocytogenes reveal new insights into the core genome components of this species.</title>
        <authorList>
            <person name="Nelson K.E."/>
            <person name="Fouts D.E."/>
            <person name="Mongodin E.F."/>
            <person name="Ravel J."/>
            <person name="DeBoy R.T."/>
            <person name="Kolonay J.F."/>
            <person name="Rasko D.A."/>
            <person name="Angiuoli S.V."/>
            <person name="Gill S.R."/>
            <person name="Paulsen I.T."/>
            <person name="Peterson J.D."/>
            <person name="White O."/>
            <person name="Nelson W.C."/>
            <person name="Nierman W.C."/>
            <person name="Beanan M.J."/>
            <person name="Brinkac L.M."/>
            <person name="Daugherty S.C."/>
            <person name="Dodson R.J."/>
            <person name="Durkin A.S."/>
            <person name="Madupu R."/>
            <person name="Haft D.H."/>
            <person name="Selengut J."/>
            <person name="Van Aken S.E."/>
            <person name="Khouri H.M."/>
            <person name="Fedorova N."/>
            <person name="Forberger H.A."/>
            <person name="Tran B."/>
            <person name="Kathariou S."/>
            <person name="Wonderling L.D."/>
            <person name="Uhlich G.A."/>
            <person name="Bayles D.O."/>
            <person name="Luchansky J.B."/>
            <person name="Fraser C.M."/>
        </authorList>
    </citation>
    <scope>NUCLEOTIDE SEQUENCE [LARGE SCALE GENOMIC DNA]</scope>
    <source>
        <strain>F2365</strain>
    </source>
</reference>
<evidence type="ECO:0000255" key="1">
    <source>
        <dbReference type="HAMAP-Rule" id="MF_00537"/>
    </source>
</evidence>
<evidence type="ECO:0000305" key="2"/>
<accession>Q71YD4</accession>
<dbReference type="EMBL" id="AE017262">
    <property type="protein sequence ID" value="AAT04680.1"/>
    <property type="molecule type" value="Genomic_DNA"/>
</dbReference>
<dbReference type="RefSeq" id="WP_010958963.1">
    <property type="nucleotide sequence ID" value="NC_002973.6"/>
</dbReference>
<dbReference type="SMR" id="Q71YD4"/>
<dbReference type="KEGG" id="lmf:LMOf2365_1911"/>
<dbReference type="HOGENOM" id="CLU_139869_0_0_9"/>
<dbReference type="GO" id="GO:0005737">
    <property type="term" value="C:cytoplasm"/>
    <property type="evidence" value="ECO:0007669"/>
    <property type="project" value="UniProtKB-ARBA"/>
</dbReference>
<dbReference type="GO" id="GO:0015935">
    <property type="term" value="C:small ribosomal subunit"/>
    <property type="evidence" value="ECO:0007669"/>
    <property type="project" value="TreeGrafter"/>
</dbReference>
<dbReference type="GO" id="GO:0019843">
    <property type="term" value="F:rRNA binding"/>
    <property type="evidence" value="ECO:0007669"/>
    <property type="project" value="UniProtKB-UniRule"/>
</dbReference>
<dbReference type="GO" id="GO:0003735">
    <property type="term" value="F:structural constituent of ribosome"/>
    <property type="evidence" value="ECO:0007669"/>
    <property type="project" value="InterPro"/>
</dbReference>
<dbReference type="GO" id="GO:0006412">
    <property type="term" value="P:translation"/>
    <property type="evidence" value="ECO:0007669"/>
    <property type="project" value="UniProtKB-UniRule"/>
</dbReference>
<dbReference type="FunFam" id="4.10.830.10:FF:000003">
    <property type="entry name" value="30S ribosomal protein S14"/>
    <property type="match status" value="1"/>
</dbReference>
<dbReference type="Gene3D" id="4.10.830.10">
    <property type="entry name" value="30s Ribosomal Protein S14, Chain N"/>
    <property type="match status" value="1"/>
</dbReference>
<dbReference type="HAMAP" id="MF_00537">
    <property type="entry name" value="Ribosomal_uS14_1"/>
    <property type="match status" value="1"/>
</dbReference>
<dbReference type="InterPro" id="IPR001209">
    <property type="entry name" value="Ribosomal_uS14"/>
</dbReference>
<dbReference type="InterPro" id="IPR023036">
    <property type="entry name" value="Ribosomal_uS14_bac/plastid"/>
</dbReference>
<dbReference type="InterPro" id="IPR018271">
    <property type="entry name" value="Ribosomal_uS14_CS"/>
</dbReference>
<dbReference type="InterPro" id="IPR043140">
    <property type="entry name" value="Ribosomal_uS14_sf"/>
</dbReference>
<dbReference type="NCBIfam" id="NF006477">
    <property type="entry name" value="PRK08881.1"/>
    <property type="match status" value="1"/>
</dbReference>
<dbReference type="PANTHER" id="PTHR19836">
    <property type="entry name" value="30S RIBOSOMAL PROTEIN S14"/>
    <property type="match status" value="1"/>
</dbReference>
<dbReference type="PANTHER" id="PTHR19836:SF19">
    <property type="entry name" value="SMALL RIBOSOMAL SUBUNIT PROTEIN US14M"/>
    <property type="match status" value="1"/>
</dbReference>
<dbReference type="Pfam" id="PF00253">
    <property type="entry name" value="Ribosomal_S14"/>
    <property type="match status" value="1"/>
</dbReference>
<dbReference type="SUPFAM" id="SSF57716">
    <property type="entry name" value="Glucocorticoid receptor-like (DNA-binding domain)"/>
    <property type="match status" value="1"/>
</dbReference>
<dbReference type="PROSITE" id="PS00527">
    <property type="entry name" value="RIBOSOMAL_S14"/>
    <property type="match status" value="1"/>
</dbReference>
<feature type="chain" id="PRO_1000128436" description="Small ribosomal subunit protein uS14A">
    <location>
        <begin position="1"/>
        <end position="89"/>
    </location>
</feature>
<comment type="function">
    <text evidence="1">Binds 16S rRNA, required for the assembly of 30S particles and may also be responsible for determining the conformation of the 16S rRNA at the A site.</text>
</comment>
<comment type="subunit">
    <text evidence="1">Part of the 30S ribosomal subunit. Contacts proteins S3 and S10.</text>
</comment>
<comment type="similarity">
    <text evidence="1">Belongs to the universal ribosomal protein uS14 family.</text>
</comment>
<keyword id="KW-0687">Ribonucleoprotein</keyword>
<keyword id="KW-0689">Ribosomal protein</keyword>
<keyword id="KW-0694">RNA-binding</keyword>
<keyword id="KW-0699">rRNA-binding</keyword>
<name>RS14_LISMF</name>